<keyword id="KW-0067">ATP-binding</keyword>
<keyword id="KW-0131">Cell cycle</keyword>
<keyword id="KW-0132">Cell division</keyword>
<keyword id="KW-0133">Cell shape</keyword>
<keyword id="KW-0961">Cell wall biogenesis/degradation</keyword>
<keyword id="KW-0963">Cytoplasm</keyword>
<keyword id="KW-0436">Ligase</keyword>
<keyword id="KW-0547">Nucleotide-binding</keyword>
<keyword id="KW-0573">Peptidoglycan synthesis</keyword>
<keyword id="KW-1185">Reference proteome</keyword>
<comment type="function">
    <text evidence="1">Cell wall formation. Catalyzes the addition of glutamate to the nucleotide precursor UDP-N-acetylmuramoyl-L-alanine (UMA).</text>
</comment>
<comment type="catalytic activity">
    <reaction evidence="1">
        <text>UDP-N-acetyl-alpha-D-muramoyl-L-alanine + D-glutamate + ATP = UDP-N-acetyl-alpha-D-muramoyl-L-alanyl-D-glutamate + ADP + phosphate + H(+)</text>
        <dbReference type="Rhea" id="RHEA:16429"/>
        <dbReference type="ChEBI" id="CHEBI:15378"/>
        <dbReference type="ChEBI" id="CHEBI:29986"/>
        <dbReference type="ChEBI" id="CHEBI:30616"/>
        <dbReference type="ChEBI" id="CHEBI:43474"/>
        <dbReference type="ChEBI" id="CHEBI:83898"/>
        <dbReference type="ChEBI" id="CHEBI:83900"/>
        <dbReference type="ChEBI" id="CHEBI:456216"/>
        <dbReference type="EC" id="6.3.2.9"/>
    </reaction>
</comment>
<comment type="pathway">
    <text evidence="1">Cell wall biogenesis; peptidoglycan biosynthesis.</text>
</comment>
<comment type="subcellular location">
    <subcellularLocation>
        <location evidence="1">Cytoplasm</location>
    </subcellularLocation>
</comment>
<comment type="similarity">
    <text evidence="1">Belongs to the MurCDEF family.</text>
</comment>
<evidence type="ECO:0000255" key="1">
    <source>
        <dbReference type="HAMAP-Rule" id="MF_00639"/>
    </source>
</evidence>
<protein>
    <recommendedName>
        <fullName evidence="1">UDP-N-acetylmuramoylalanine--D-glutamate ligase</fullName>
        <ecNumber evidence="1">6.3.2.9</ecNumber>
    </recommendedName>
    <alternativeName>
        <fullName evidence="1">D-glutamic acid-adding enzyme</fullName>
    </alternativeName>
    <alternativeName>
        <fullName evidence="1">UDP-N-acetylmuramoyl-L-alanyl-D-glutamate synthetase</fullName>
    </alternativeName>
</protein>
<name>MURD_PROMA</name>
<feature type="chain" id="PRO_0000109058" description="UDP-N-acetylmuramoylalanine--D-glutamate ligase">
    <location>
        <begin position="1"/>
        <end position="470"/>
    </location>
</feature>
<feature type="binding site" evidence="1">
    <location>
        <begin position="124"/>
        <end position="130"/>
    </location>
    <ligand>
        <name>ATP</name>
        <dbReference type="ChEBI" id="CHEBI:30616"/>
    </ligand>
</feature>
<sequence>MKEFENPPPITVAIGLGRSGVAAARYLNDQGEKVQIFESSKKASFGKLSGNLEKEGIKVNLGVPLNFSSFQPILEKLALVIVSPGIPWDHPTLNQLRKRGIIVESEINLAWRALKNTPWVGITGTNGKTTVTHMLNHVLNNSFIESTIGGNVGKAATEIALALRKSTKHKPKWLIMELSSYQIETAPEISPEIGIWTTLTPDHLERHGSLENYFAIKRTLIANSSIRIYNADDKYLSKNRLNLPKGLWVSAQKYNSNINQLDFWISSNGMVIEQGNELFHSSALQLPGDHNLQNLLLVSAAARKIGLSGMAIENALISFAGITHRLEKVDKIIDIDIFNDSKATNFDSAEIGLKATSAPVILIAGGLSKQGIYLDWINQIKEKVCAVILIGESRVKLQHLIKSHGFRGEIVCYEKLDKAVDKAIKLGVKFRAKSILFSPGCASFDQYSNFEERGDHFKKLIKESSINYKL</sequence>
<proteinExistence type="inferred from homology"/>
<dbReference type="EC" id="6.3.2.9" evidence="1"/>
<dbReference type="EMBL" id="AE017126">
    <property type="protein sequence ID" value="AAQ00483.1"/>
    <property type="molecule type" value="Genomic_DNA"/>
</dbReference>
<dbReference type="RefSeq" id="NP_875830.1">
    <property type="nucleotide sequence ID" value="NC_005042.1"/>
</dbReference>
<dbReference type="RefSeq" id="WP_011125590.1">
    <property type="nucleotide sequence ID" value="NC_005042.1"/>
</dbReference>
<dbReference type="SMR" id="Q7VAM1"/>
<dbReference type="STRING" id="167539.Pro_1439"/>
<dbReference type="EnsemblBacteria" id="AAQ00483">
    <property type="protein sequence ID" value="AAQ00483"/>
    <property type="gene ID" value="Pro_1439"/>
</dbReference>
<dbReference type="KEGG" id="pma:Pro_1439"/>
<dbReference type="PATRIC" id="fig|167539.5.peg.1506"/>
<dbReference type="eggNOG" id="COG0771">
    <property type="taxonomic scope" value="Bacteria"/>
</dbReference>
<dbReference type="HOGENOM" id="CLU_032540_0_0_3"/>
<dbReference type="OrthoDB" id="9809796at2"/>
<dbReference type="UniPathway" id="UPA00219"/>
<dbReference type="Proteomes" id="UP000001420">
    <property type="component" value="Chromosome"/>
</dbReference>
<dbReference type="GO" id="GO:0005737">
    <property type="term" value="C:cytoplasm"/>
    <property type="evidence" value="ECO:0007669"/>
    <property type="project" value="UniProtKB-SubCell"/>
</dbReference>
<dbReference type="GO" id="GO:0005524">
    <property type="term" value="F:ATP binding"/>
    <property type="evidence" value="ECO:0007669"/>
    <property type="project" value="UniProtKB-UniRule"/>
</dbReference>
<dbReference type="GO" id="GO:0008764">
    <property type="term" value="F:UDP-N-acetylmuramoylalanine-D-glutamate ligase activity"/>
    <property type="evidence" value="ECO:0007669"/>
    <property type="project" value="UniProtKB-UniRule"/>
</dbReference>
<dbReference type="GO" id="GO:0051301">
    <property type="term" value="P:cell division"/>
    <property type="evidence" value="ECO:0007669"/>
    <property type="project" value="UniProtKB-KW"/>
</dbReference>
<dbReference type="GO" id="GO:0071555">
    <property type="term" value="P:cell wall organization"/>
    <property type="evidence" value="ECO:0007669"/>
    <property type="project" value="UniProtKB-KW"/>
</dbReference>
<dbReference type="GO" id="GO:0009252">
    <property type="term" value="P:peptidoglycan biosynthetic process"/>
    <property type="evidence" value="ECO:0007669"/>
    <property type="project" value="UniProtKB-UniRule"/>
</dbReference>
<dbReference type="GO" id="GO:0008360">
    <property type="term" value="P:regulation of cell shape"/>
    <property type="evidence" value="ECO:0007669"/>
    <property type="project" value="UniProtKB-KW"/>
</dbReference>
<dbReference type="Gene3D" id="3.90.190.20">
    <property type="entry name" value="Mur ligase, C-terminal domain"/>
    <property type="match status" value="1"/>
</dbReference>
<dbReference type="Gene3D" id="3.40.1190.10">
    <property type="entry name" value="Mur-like, catalytic domain"/>
    <property type="match status" value="1"/>
</dbReference>
<dbReference type="Gene3D" id="3.40.50.720">
    <property type="entry name" value="NAD(P)-binding Rossmann-like Domain"/>
    <property type="match status" value="1"/>
</dbReference>
<dbReference type="HAMAP" id="MF_00639">
    <property type="entry name" value="MurD"/>
    <property type="match status" value="1"/>
</dbReference>
<dbReference type="InterPro" id="IPR036565">
    <property type="entry name" value="Mur-like_cat_sf"/>
</dbReference>
<dbReference type="InterPro" id="IPR036615">
    <property type="entry name" value="Mur_ligase_C_dom_sf"/>
</dbReference>
<dbReference type="InterPro" id="IPR013221">
    <property type="entry name" value="Mur_ligase_cen"/>
</dbReference>
<dbReference type="InterPro" id="IPR005762">
    <property type="entry name" value="MurD"/>
</dbReference>
<dbReference type="NCBIfam" id="TIGR01087">
    <property type="entry name" value="murD"/>
    <property type="match status" value="1"/>
</dbReference>
<dbReference type="PANTHER" id="PTHR43692">
    <property type="entry name" value="UDP-N-ACETYLMURAMOYLALANINE--D-GLUTAMATE LIGASE"/>
    <property type="match status" value="1"/>
</dbReference>
<dbReference type="PANTHER" id="PTHR43692:SF1">
    <property type="entry name" value="UDP-N-ACETYLMURAMOYLALANINE--D-GLUTAMATE LIGASE"/>
    <property type="match status" value="1"/>
</dbReference>
<dbReference type="Pfam" id="PF08245">
    <property type="entry name" value="Mur_ligase_M"/>
    <property type="match status" value="1"/>
</dbReference>
<dbReference type="Pfam" id="PF21799">
    <property type="entry name" value="MurD-like_N"/>
    <property type="match status" value="1"/>
</dbReference>
<dbReference type="SUPFAM" id="SSF51984">
    <property type="entry name" value="MurCD N-terminal domain"/>
    <property type="match status" value="1"/>
</dbReference>
<dbReference type="SUPFAM" id="SSF53623">
    <property type="entry name" value="MurD-like peptide ligases, catalytic domain"/>
    <property type="match status" value="1"/>
</dbReference>
<dbReference type="SUPFAM" id="SSF53244">
    <property type="entry name" value="MurD-like peptide ligases, peptide-binding domain"/>
    <property type="match status" value="1"/>
</dbReference>
<accession>Q7VAM1</accession>
<organism>
    <name type="scientific">Prochlorococcus marinus (strain SARG / CCMP1375 / SS120)</name>
    <dbReference type="NCBI Taxonomy" id="167539"/>
    <lineage>
        <taxon>Bacteria</taxon>
        <taxon>Bacillati</taxon>
        <taxon>Cyanobacteriota</taxon>
        <taxon>Cyanophyceae</taxon>
        <taxon>Synechococcales</taxon>
        <taxon>Prochlorococcaceae</taxon>
        <taxon>Prochlorococcus</taxon>
    </lineage>
</organism>
<reference key="1">
    <citation type="journal article" date="2003" name="Proc. Natl. Acad. Sci. U.S.A.">
        <title>Genome sequence of the cyanobacterium Prochlorococcus marinus SS120, a nearly minimal oxyphototrophic genome.</title>
        <authorList>
            <person name="Dufresne A."/>
            <person name="Salanoubat M."/>
            <person name="Partensky F."/>
            <person name="Artiguenave F."/>
            <person name="Axmann I.M."/>
            <person name="Barbe V."/>
            <person name="Duprat S."/>
            <person name="Galperin M.Y."/>
            <person name="Koonin E.V."/>
            <person name="Le Gall F."/>
            <person name="Makarova K.S."/>
            <person name="Ostrowski M."/>
            <person name="Oztas S."/>
            <person name="Robert C."/>
            <person name="Rogozin I.B."/>
            <person name="Scanlan D.J."/>
            <person name="Tandeau de Marsac N."/>
            <person name="Weissenbach J."/>
            <person name="Wincker P."/>
            <person name="Wolf Y.I."/>
            <person name="Hess W.R."/>
        </authorList>
    </citation>
    <scope>NUCLEOTIDE SEQUENCE [LARGE SCALE GENOMIC DNA]</scope>
    <source>
        <strain>SARG / CCMP1375 / SS120</strain>
    </source>
</reference>
<gene>
    <name evidence="1" type="primary">murD</name>
    <name type="ordered locus">Pro_1439</name>
</gene>